<gene>
    <name type="ORF">FVEG_08293</name>
</gene>
<organism>
    <name type="scientific">Gibberella moniliformis (strain M3125 / FGSC 7600)</name>
    <name type="common">Maize ear and stalk rot fungus</name>
    <name type="synonym">Fusarium verticillioides</name>
    <dbReference type="NCBI Taxonomy" id="334819"/>
    <lineage>
        <taxon>Eukaryota</taxon>
        <taxon>Fungi</taxon>
        <taxon>Dikarya</taxon>
        <taxon>Ascomycota</taxon>
        <taxon>Pezizomycotina</taxon>
        <taxon>Sordariomycetes</taxon>
        <taxon>Hypocreomycetidae</taxon>
        <taxon>Hypocreales</taxon>
        <taxon>Nectriaceae</taxon>
        <taxon>Fusarium</taxon>
        <taxon>Fusarium fujikuroi species complex</taxon>
    </lineage>
</organism>
<sequence length="440" mass="49106">MTIQSNEFNVAIVGAGVAGLALAMALHRKGVLFTIYEEAKEYSVVGAGIGFGPNGMQALDLIEPGFRPLYEGLCVGNKSADAQWVFFEGYLLEPGLGDNKPWAGNLKSAWGNQDYVRKSAHRKELLDIMTSFIPIESVKFNKKLVSIKEYTDRVMLEFADGEIVAHSILAGSDGIASTVREYLLRPTHPEEALPVYSGAHCYRAVIPMDEAYEIMGEKTDVAKIYFGHNRGAVSYRITGGKELNFLLIKATPNEQWPYPGRVTKQITQEEMLADFDGDNIDDRFRRLVAKAKPVKWGLFHHAKTSTYYKDRVCILGDSAHASMPFQAAGAAQGVEDALVLAYILEELMKSPTRGSEQLEEINAGLAAYDAIRRPRAQKQLDRAFEVGTMIYFQHPECGDDMTKILHKLQNGWLDWLWFPDLKADVETALSQMRNDVQKKA</sequence>
<dbReference type="EC" id="1.-.-.-" evidence="11"/>
<dbReference type="EMBL" id="CM000587">
    <property type="protein sequence ID" value="EWG48581.1"/>
    <property type="molecule type" value="Genomic_DNA"/>
</dbReference>
<dbReference type="RefSeq" id="XP_018754772.1">
    <property type="nucleotide sequence ID" value="XM_018897185.1"/>
</dbReference>
<dbReference type="SMR" id="W7MC48"/>
<dbReference type="STRING" id="334819.W7MC48"/>
<dbReference type="EnsemblFungi" id="FVEG_08293T0">
    <property type="protein sequence ID" value="FVEG_08293T0"/>
    <property type="gene ID" value="FVEG_08293"/>
</dbReference>
<dbReference type="GeneID" id="30066035"/>
<dbReference type="KEGG" id="fvr:FVEG_08293"/>
<dbReference type="VEuPathDB" id="FungiDB:FVEG_08293"/>
<dbReference type="eggNOG" id="KOG2614">
    <property type="taxonomic scope" value="Eukaryota"/>
</dbReference>
<dbReference type="HOGENOM" id="CLU_009665_6_3_1"/>
<dbReference type="OMA" id="HRYTSTY"/>
<dbReference type="OrthoDB" id="41959at110618"/>
<dbReference type="Proteomes" id="UP000009096">
    <property type="component" value="Chromosome 10"/>
</dbReference>
<dbReference type="GO" id="GO:0016020">
    <property type="term" value="C:membrane"/>
    <property type="evidence" value="ECO:0007669"/>
    <property type="project" value="UniProtKB-SubCell"/>
</dbReference>
<dbReference type="GO" id="GO:0071949">
    <property type="term" value="F:FAD binding"/>
    <property type="evidence" value="ECO:0007669"/>
    <property type="project" value="InterPro"/>
</dbReference>
<dbReference type="GO" id="GO:0004497">
    <property type="term" value="F:monooxygenase activity"/>
    <property type="evidence" value="ECO:0007669"/>
    <property type="project" value="UniProtKB-KW"/>
</dbReference>
<dbReference type="GO" id="GO:0044550">
    <property type="term" value="P:secondary metabolite biosynthetic process"/>
    <property type="evidence" value="ECO:0007669"/>
    <property type="project" value="TreeGrafter"/>
</dbReference>
<dbReference type="Gene3D" id="3.50.50.60">
    <property type="entry name" value="FAD/NAD(P)-binding domain"/>
    <property type="match status" value="1"/>
</dbReference>
<dbReference type="InterPro" id="IPR002938">
    <property type="entry name" value="FAD-bd"/>
</dbReference>
<dbReference type="InterPro" id="IPR036188">
    <property type="entry name" value="FAD/NAD-bd_sf"/>
</dbReference>
<dbReference type="InterPro" id="IPR051104">
    <property type="entry name" value="FAD_monoxygenase"/>
</dbReference>
<dbReference type="PANTHER" id="PTHR46720:SF3">
    <property type="entry name" value="FAD-BINDING DOMAIN-CONTAINING PROTEIN-RELATED"/>
    <property type="match status" value="1"/>
</dbReference>
<dbReference type="PANTHER" id="PTHR46720">
    <property type="entry name" value="HYDROXYLASE, PUTATIVE (AFU_ORTHOLOGUE AFUA_3G01460)-RELATED"/>
    <property type="match status" value="1"/>
</dbReference>
<dbReference type="Pfam" id="PF01494">
    <property type="entry name" value="FAD_binding_3"/>
    <property type="match status" value="1"/>
</dbReference>
<dbReference type="PRINTS" id="PR00420">
    <property type="entry name" value="RNGMNOXGNASE"/>
</dbReference>
<dbReference type="SUPFAM" id="SSF54373">
    <property type="entry name" value="FAD-linked reductases, C-terminal domain"/>
    <property type="match status" value="1"/>
</dbReference>
<dbReference type="SUPFAM" id="SSF51905">
    <property type="entry name" value="FAD/NAD(P)-binding domain"/>
    <property type="match status" value="1"/>
</dbReference>
<proteinExistence type="evidence at transcript level"/>
<protein>
    <recommendedName>
        <fullName evidence="9">FAD-dependent monooxygenase FVEG_08293</fullName>
        <ecNumber evidence="11">1.-.-.-</ecNumber>
    </recommendedName>
    <alternativeName>
        <fullName evidence="9">Fusarium detoxification of benzoxazolinone cluster 1 protein FVEG_08293</fullName>
        <shortName evidence="9">FDB1 cluster protein FVEG_08293</shortName>
    </alternativeName>
</protein>
<reference key="1">
    <citation type="journal article" date="2010" name="Nature">
        <title>Comparative genomics reveals mobile pathogenicity chromosomes in Fusarium.</title>
        <authorList>
            <person name="Ma L.-J."/>
            <person name="van der Does H.C."/>
            <person name="Borkovich K.A."/>
            <person name="Coleman J.J."/>
            <person name="Daboussi M.-J."/>
            <person name="Di Pietro A."/>
            <person name="Dufresne M."/>
            <person name="Freitag M."/>
            <person name="Grabherr M."/>
            <person name="Henrissat B."/>
            <person name="Houterman P.M."/>
            <person name="Kang S."/>
            <person name="Shim W.-B."/>
            <person name="Woloshuk C."/>
            <person name="Xie X."/>
            <person name="Xu J.-R."/>
            <person name="Antoniw J."/>
            <person name="Baker S.E."/>
            <person name="Bluhm B.H."/>
            <person name="Breakspear A."/>
            <person name="Brown D.W."/>
            <person name="Butchko R.A.E."/>
            <person name="Chapman S."/>
            <person name="Coulson R."/>
            <person name="Coutinho P.M."/>
            <person name="Danchin E.G.J."/>
            <person name="Diener A."/>
            <person name="Gale L.R."/>
            <person name="Gardiner D.M."/>
            <person name="Goff S."/>
            <person name="Hammond-Kosack K.E."/>
            <person name="Hilburn K."/>
            <person name="Hua-Van A."/>
            <person name="Jonkers W."/>
            <person name="Kazan K."/>
            <person name="Kodira C.D."/>
            <person name="Koehrsen M."/>
            <person name="Kumar L."/>
            <person name="Lee Y.-H."/>
            <person name="Li L."/>
            <person name="Manners J.M."/>
            <person name="Miranda-Saavedra D."/>
            <person name="Mukherjee M."/>
            <person name="Park G."/>
            <person name="Park J."/>
            <person name="Park S.-Y."/>
            <person name="Proctor R.H."/>
            <person name="Regev A."/>
            <person name="Ruiz-Roldan M.C."/>
            <person name="Sain D."/>
            <person name="Sakthikumar S."/>
            <person name="Sykes S."/>
            <person name="Schwartz D.C."/>
            <person name="Turgeon B.G."/>
            <person name="Wapinski I."/>
            <person name="Yoder O."/>
            <person name="Young S."/>
            <person name="Zeng Q."/>
            <person name="Zhou S."/>
            <person name="Galagan J."/>
            <person name="Cuomo C.A."/>
            <person name="Kistler H.C."/>
            <person name="Rep M."/>
        </authorList>
    </citation>
    <scope>NUCLEOTIDE SEQUENCE [LARGE SCALE GENOMIC DNA]</scope>
    <source>
        <strain>M3125 / FGSC 7600</strain>
    </source>
</reference>
<reference key="2">
    <citation type="journal article" date="2002" name="Mol. Plant Microbe Interact.">
        <title>Fdb1 and Fdb2, Fusarium verticillioides loci necessary for detoxification of preformed antimicrobials from corn.</title>
        <authorList>
            <person name="Glenn A.E."/>
            <person name="Gold S.E."/>
            <person name="Bacon C.W."/>
        </authorList>
    </citation>
    <scope>FUNCTION</scope>
</reference>
<reference key="3">
    <citation type="journal article" date="2003" name="Appl. Environ. Microbiol.">
        <title>Identification of intermediate and branch metabolites resulting from biotransformation of 2-benzoxazolinone by Fusarium verticillioides.</title>
        <authorList>
            <person name="Glenn A.E."/>
            <person name="Meredith F.I."/>
            <person name="Morrison W.H. III"/>
            <person name="Bacon C.W."/>
        </authorList>
    </citation>
    <scope>FUNCTION</scope>
</reference>
<reference key="4">
    <citation type="journal article" date="2009" name="J. Appl. Microbiol.">
        <title>FDB2 encodes a member of the arylamine N-acetyltransferase family and is necessary for biotransformation of benzoxazolinones by Fusarium verticillioides.</title>
        <authorList>
            <person name="Glenn A.E."/>
            <person name="Bacon C.W."/>
        </authorList>
    </citation>
    <scope>FUNCTION</scope>
</reference>
<reference key="5">
    <citation type="journal article" date="2016" name="PLoS ONE">
        <title>Two horizontally transferred xenobiotic resistance gene clusters associated with detoxification of benzoxazolinones by Fusarium species.</title>
        <authorList>
            <person name="Glenn A.E."/>
            <person name="Davis C.B."/>
            <person name="Gao M."/>
            <person name="Gold S.E."/>
            <person name="Mitchell T.R."/>
            <person name="Proctor R.H."/>
            <person name="Stewart J.E."/>
            <person name="Snook M.E."/>
        </authorList>
    </citation>
    <scope>FUNCTION</scope>
    <scope>INDUCTION</scope>
    <scope>DISRUPTION PHENOTYPE</scope>
</reference>
<name>FDB93_GIBM7</name>
<accession>W7MC48</accession>
<feature type="chain" id="PRO_0000454618" description="FAD-dependent monooxygenase FVEG_08293">
    <location>
        <begin position="1"/>
        <end position="440"/>
    </location>
</feature>
<feature type="transmembrane region" description="Helical" evidence="3">
    <location>
        <begin position="7"/>
        <end position="26"/>
    </location>
</feature>
<feature type="active site" evidence="2">
    <location>
        <position position="203"/>
    </location>
</feature>
<feature type="active site" evidence="2">
    <location>
        <position position="235"/>
    </location>
</feature>
<feature type="binding site" evidence="2">
    <location>
        <position position="37"/>
    </location>
    <ligand>
        <name>FAD</name>
        <dbReference type="ChEBI" id="CHEBI:57692"/>
    </ligand>
</feature>
<feature type="binding site" evidence="2">
    <location>
        <position position="50"/>
    </location>
    <ligand>
        <name>FAD</name>
        <dbReference type="ChEBI" id="CHEBI:57692"/>
    </ligand>
</feature>
<feature type="binding site" evidence="2">
    <location>
        <position position="122"/>
    </location>
    <ligand>
        <name>FAD</name>
        <dbReference type="ChEBI" id="CHEBI:57692"/>
    </ligand>
</feature>
<feature type="binding site" evidence="2">
    <location>
        <position position="317"/>
    </location>
    <ligand>
        <name>FAD</name>
        <dbReference type="ChEBI" id="CHEBI:57692"/>
    </ligand>
</feature>
<feature type="binding site" evidence="2">
    <location>
        <position position="330"/>
    </location>
    <ligand>
        <name>FAD</name>
        <dbReference type="ChEBI" id="CHEBI:57692"/>
    </ligand>
</feature>
<feature type="glycosylation site" description="N-linked (GlcNAc...) asparagine" evidence="4">
    <location>
        <position position="77"/>
    </location>
</feature>
<comment type="function">
    <text evidence="5 6 7 8 11">FAD-dependent monooxygenase; part of the Fusarium detoxification of benzoxazolinone cluster 1 (FDB1) involved in the degradation of benzoxazolinones produced by the host plant (PubMed:19302487, PubMed:26808652). Maize, wheat, and rye produce the 2 benzoxazinone phytoanticipins 2,4-dihy-droxy-7-methoxy-1,4-benzoxazin-3-one (DIMBOA) and 2,4-dihydroxy-1,4-benzoxazin-3-one (DIBOA) that, due to their inherent instability once released, spontaneously degrade to the more stable corresponding benzoxazolinones, 6-methoxy-2-benzoxazolinone (MBOA) and 2-benzoxazolinone (BOA), respectively (PubMed:11876429). The first step in the detoxification of benzoxazolinones involves the hydrolysis of the cyclic ester bond of benzoxazolinones by the FDB1 cluster gamma-lactamase MBL1 to aminophenols (PubMed:12788712, PubMed:26808652). MBL1 is able to convert BOA into 2-aminophenol (2-AP), as well as MBOA into 5-methoxy-2-aminophenol (2-AMP) (PubMed:12788712, PubMed:26808652). The FDB2 cluster N-malonyltransferase FDB2/NAT1 then metabolizes aminophenols via N-malonylation to non-toxic malonamic acids (PubMed:12788712, PubMed:19302487). FDB2/NAT1 converts 2-AP into N-(2-hydroxyphenyl) malonamic acid (HPMA) and 2-AMP into N-(2-hydroxy-4-methoxyphenyl) malonamic acid (HMPMA) (PubMed:12788712, PubMed:19302487). The duplicated dienlactone hydrolases DLH1 and DLH2 may provide redundant function for hydrolyzing the lactone moiety in the BOA molecule (Probable). The roles of the amidases an other enzymes encoded by the 2 FDB clusters have not been identified so far (Probable).</text>
</comment>
<comment type="cofactor">
    <cofactor evidence="1">
        <name>FAD</name>
        <dbReference type="ChEBI" id="CHEBI:57692"/>
    </cofactor>
</comment>
<comment type="subcellular location">
    <subcellularLocation>
        <location evidence="3">Membrane</location>
        <topology evidence="3">Single-pass membrane protein</topology>
    </subcellularLocation>
</comment>
<comment type="induction">
    <text evidence="8">Expression is induced in response to 2-benzoxasolinone (BOA) exposure.</text>
</comment>
<comment type="disruption phenotype">
    <text evidence="8">Does not affect BOA degradation.</text>
</comment>
<comment type="miscellaneous">
    <text evidence="11">Fusarium verticillioides possesses 2 unlinked loci, FDB1 and FDB2, necessary for detoxification of antimicrobial compounds produced by maize, including 2-benzoxazolinone (BOA) (Probable). The FDB2 cluster arose as a duplication of the FDB1 cluster with rearrangement and expansion by incorporating additional genes (Probable).</text>
</comment>
<comment type="similarity">
    <text evidence="10">Belongs to the paxM FAD-dependent monooxygenase family.</text>
</comment>
<keyword id="KW-0274">FAD</keyword>
<keyword id="KW-0285">Flavoprotein</keyword>
<keyword id="KW-0325">Glycoprotein</keyword>
<keyword id="KW-0472">Membrane</keyword>
<keyword id="KW-0503">Monooxygenase</keyword>
<keyword id="KW-0560">Oxidoreductase</keyword>
<keyword id="KW-1185">Reference proteome</keyword>
<keyword id="KW-0812">Transmembrane</keyword>
<keyword id="KW-1133">Transmembrane helix</keyword>
<evidence type="ECO:0000250" key="1">
    <source>
        <dbReference type="UniProtKB" id="A6T923"/>
    </source>
</evidence>
<evidence type="ECO:0000250" key="2">
    <source>
        <dbReference type="UniProtKB" id="B8M9J8"/>
    </source>
</evidence>
<evidence type="ECO:0000255" key="3"/>
<evidence type="ECO:0000255" key="4">
    <source>
        <dbReference type="PROSITE-ProRule" id="PRU00498"/>
    </source>
</evidence>
<evidence type="ECO:0000269" key="5">
    <source>
    </source>
</evidence>
<evidence type="ECO:0000269" key="6">
    <source>
    </source>
</evidence>
<evidence type="ECO:0000269" key="7">
    <source>
    </source>
</evidence>
<evidence type="ECO:0000269" key="8">
    <source>
    </source>
</evidence>
<evidence type="ECO:0000303" key="9">
    <source>
    </source>
</evidence>
<evidence type="ECO:0000305" key="10"/>
<evidence type="ECO:0000305" key="11">
    <source>
    </source>
</evidence>